<evidence type="ECO:0000255" key="1">
    <source>
        <dbReference type="HAMAP-Rule" id="MF_00019"/>
    </source>
</evidence>
<organism>
    <name type="scientific">Escherichia coli O7:K1 (strain IAI39 / ExPEC)</name>
    <dbReference type="NCBI Taxonomy" id="585057"/>
    <lineage>
        <taxon>Bacteria</taxon>
        <taxon>Pseudomonadati</taxon>
        <taxon>Pseudomonadota</taxon>
        <taxon>Gammaproteobacteria</taxon>
        <taxon>Enterobacterales</taxon>
        <taxon>Enterobacteriaceae</taxon>
        <taxon>Escherichia</taxon>
    </lineage>
</organism>
<accession>B7NKJ0</accession>
<comment type="function">
    <text evidence="1">Catalyzes the reversible formation of acyl-phosphate (acyl-PO(4)) from acyl-[acyl-carrier-protein] (acyl-ACP). This enzyme utilizes acyl-ACP as fatty acyl donor, but not acyl-CoA.</text>
</comment>
<comment type="catalytic activity">
    <reaction evidence="1">
        <text>a fatty acyl-[ACP] + phosphate = an acyl phosphate + holo-[ACP]</text>
        <dbReference type="Rhea" id="RHEA:42292"/>
        <dbReference type="Rhea" id="RHEA-COMP:9685"/>
        <dbReference type="Rhea" id="RHEA-COMP:14125"/>
        <dbReference type="ChEBI" id="CHEBI:43474"/>
        <dbReference type="ChEBI" id="CHEBI:59918"/>
        <dbReference type="ChEBI" id="CHEBI:64479"/>
        <dbReference type="ChEBI" id="CHEBI:138651"/>
        <dbReference type="EC" id="2.3.1.274"/>
    </reaction>
</comment>
<comment type="pathway">
    <text evidence="1">Lipid metabolism; phospholipid metabolism.</text>
</comment>
<comment type="subunit">
    <text evidence="1">Homodimer. Probably interacts with PlsY.</text>
</comment>
<comment type="subcellular location">
    <subcellularLocation>
        <location evidence="1">Cytoplasm</location>
    </subcellularLocation>
    <text evidence="1">Associated with the membrane possibly through PlsY.</text>
</comment>
<comment type="similarity">
    <text evidence="1">Belongs to the PlsX family.</text>
</comment>
<proteinExistence type="inferred from homology"/>
<feature type="chain" id="PRO_1000116377" description="Phosphate acyltransferase">
    <location>
        <begin position="1"/>
        <end position="356"/>
    </location>
</feature>
<sequence>MTRLTLALDVMGGDFGPSVTVPAALQALNSNSQLTLLLVGNPDAITPLLAKADFEQRSRLQIIPAQSVIASDARPSQAIRASRGSSMRVALELVKEGRAQACVSAGNTGALMGLAKLLLKPLEGIERPALVTVLPHQQKGKTVVLDLGANVDCDSTMLVQFAIMGSVLAEEVVEIPNPRVALLNIGEEEVKGLDSIRDASAVLKTIPSINYIGYLEANELLTGKTDVLVCDGFTGNVTLKTMEGVVRMFLSLLKSQGEGKKRSWWLLLLKRWLQKSLTRRFSHLNPDQYNGACLLGLRGTVIKSHGAANQRAFAVAIEQAVQAVQRQVPQRIAARLESVYPAGFELLDGGKSGTLR</sequence>
<name>PLSX_ECO7I</name>
<protein>
    <recommendedName>
        <fullName evidence="1">Phosphate acyltransferase</fullName>
        <ecNumber evidence="1">2.3.1.274</ecNumber>
    </recommendedName>
    <alternativeName>
        <fullName evidence="1">Acyl-ACP phosphotransacylase</fullName>
    </alternativeName>
    <alternativeName>
        <fullName evidence="1">Acyl-[acyl-carrier-protein]--phosphate acyltransferase</fullName>
    </alternativeName>
    <alternativeName>
        <fullName evidence="1">Phosphate-acyl-ACP acyltransferase</fullName>
    </alternativeName>
</protein>
<reference key="1">
    <citation type="journal article" date="2009" name="PLoS Genet.">
        <title>Organised genome dynamics in the Escherichia coli species results in highly diverse adaptive paths.</title>
        <authorList>
            <person name="Touchon M."/>
            <person name="Hoede C."/>
            <person name="Tenaillon O."/>
            <person name="Barbe V."/>
            <person name="Baeriswyl S."/>
            <person name="Bidet P."/>
            <person name="Bingen E."/>
            <person name="Bonacorsi S."/>
            <person name="Bouchier C."/>
            <person name="Bouvet O."/>
            <person name="Calteau A."/>
            <person name="Chiapello H."/>
            <person name="Clermont O."/>
            <person name="Cruveiller S."/>
            <person name="Danchin A."/>
            <person name="Diard M."/>
            <person name="Dossat C."/>
            <person name="Karoui M.E."/>
            <person name="Frapy E."/>
            <person name="Garry L."/>
            <person name="Ghigo J.M."/>
            <person name="Gilles A.M."/>
            <person name="Johnson J."/>
            <person name="Le Bouguenec C."/>
            <person name="Lescat M."/>
            <person name="Mangenot S."/>
            <person name="Martinez-Jehanne V."/>
            <person name="Matic I."/>
            <person name="Nassif X."/>
            <person name="Oztas S."/>
            <person name="Petit M.A."/>
            <person name="Pichon C."/>
            <person name="Rouy Z."/>
            <person name="Ruf C.S."/>
            <person name="Schneider D."/>
            <person name="Tourret J."/>
            <person name="Vacherie B."/>
            <person name="Vallenet D."/>
            <person name="Medigue C."/>
            <person name="Rocha E.P.C."/>
            <person name="Denamur E."/>
        </authorList>
    </citation>
    <scope>NUCLEOTIDE SEQUENCE [LARGE SCALE GENOMIC DNA]</scope>
    <source>
        <strain>IAI39 / ExPEC</strain>
    </source>
</reference>
<dbReference type="EC" id="2.3.1.274" evidence="1"/>
<dbReference type="EMBL" id="CU928164">
    <property type="protein sequence ID" value="CAR18198.1"/>
    <property type="molecule type" value="Genomic_DNA"/>
</dbReference>
<dbReference type="RefSeq" id="WP_000197578.1">
    <property type="nucleotide sequence ID" value="NC_011750.1"/>
</dbReference>
<dbReference type="RefSeq" id="YP_002408036.1">
    <property type="nucleotide sequence ID" value="NC_011750.1"/>
</dbReference>
<dbReference type="SMR" id="B7NKJ0"/>
<dbReference type="STRING" id="585057.ECIAI39_2071"/>
<dbReference type="GeneID" id="93776318"/>
<dbReference type="KEGG" id="ect:ECIAI39_2071"/>
<dbReference type="PATRIC" id="fig|585057.6.peg.2152"/>
<dbReference type="HOGENOM" id="CLU_039379_1_0_6"/>
<dbReference type="UniPathway" id="UPA00085"/>
<dbReference type="Proteomes" id="UP000000749">
    <property type="component" value="Chromosome"/>
</dbReference>
<dbReference type="GO" id="GO:0005737">
    <property type="term" value="C:cytoplasm"/>
    <property type="evidence" value="ECO:0007669"/>
    <property type="project" value="UniProtKB-SubCell"/>
</dbReference>
<dbReference type="GO" id="GO:0043811">
    <property type="term" value="F:phosphate:acyl-[acyl carrier protein] acyltransferase activity"/>
    <property type="evidence" value="ECO:0007669"/>
    <property type="project" value="UniProtKB-UniRule"/>
</dbReference>
<dbReference type="GO" id="GO:0006633">
    <property type="term" value="P:fatty acid biosynthetic process"/>
    <property type="evidence" value="ECO:0007669"/>
    <property type="project" value="UniProtKB-UniRule"/>
</dbReference>
<dbReference type="GO" id="GO:0008654">
    <property type="term" value="P:phospholipid biosynthetic process"/>
    <property type="evidence" value="ECO:0007669"/>
    <property type="project" value="UniProtKB-KW"/>
</dbReference>
<dbReference type="FunFam" id="3.40.718.10:FF:000008">
    <property type="entry name" value="Phosphate acyltransferase"/>
    <property type="match status" value="1"/>
</dbReference>
<dbReference type="Gene3D" id="3.40.718.10">
    <property type="entry name" value="Isopropylmalate Dehydrogenase"/>
    <property type="match status" value="1"/>
</dbReference>
<dbReference type="HAMAP" id="MF_00019">
    <property type="entry name" value="PlsX"/>
    <property type="match status" value="1"/>
</dbReference>
<dbReference type="InterPro" id="IPR003664">
    <property type="entry name" value="FA_synthesis"/>
</dbReference>
<dbReference type="InterPro" id="IPR012281">
    <property type="entry name" value="Phospholipid_synth_PlsX-like"/>
</dbReference>
<dbReference type="NCBIfam" id="TIGR00182">
    <property type="entry name" value="plsX"/>
    <property type="match status" value="1"/>
</dbReference>
<dbReference type="PANTHER" id="PTHR30100">
    <property type="entry name" value="FATTY ACID/PHOSPHOLIPID SYNTHESIS PROTEIN PLSX"/>
    <property type="match status" value="1"/>
</dbReference>
<dbReference type="PANTHER" id="PTHR30100:SF1">
    <property type="entry name" value="PHOSPHATE ACYLTRANSFERASE"/>
    <property type="match status" value="1"/>
</dbReference>
<dbReference type="Pfam" id="PF02504">
    <property type="entry name" value="FA_synthesis"/>
    <property type="match status" value="1"/>
</dbReference>
<dbReference type="PIRSF" id="PIRSF002465">
    <property type="entry name" value="Phsphlp_syn_PlsX"/>
    <property type="match status" value="1"/>
</dbReference>
<dbReference type="SUPFAM" id="SSF53659">
    <property type="entry name" value="Isocitrate/Isopropylmalate dehydrogenase-like"/>
    <property type="match status" value="1"/>
</dbReference>
<gene>
    <name evidence="1" type="primary">plsX</name>
    <name type="ordered locus">ECIAI39_2071</name>
</gene>
<keyword id="KW-0963">Cytoplasm</keyword>
<keyword id="KW-0444">Lipid biosynthesis</keyword>
<keyword id="KW-0443">Lipid metabolism</keyword>
<keyword id="KW-0594">Phospholipid biosynthesis</keyword>
<keyword id="KW-1208">Phospholipid metabolism</keyword>
<keyword id="KW-0808">Transferase</keyword>